<evidence type="ECO:0000255" key="1">
    <source>
        <dbReference type="HAMAP-Rule" id="MF_01395"/>
    </source>
</evidence>
<evidence type="ECO:0000255" key="2">
    <source>
        <dbReference type="PROSITE-ProRule" id="PRU01136"/>
    </source>
</evidence>
<organism>
    <name type="scientific">Streptococcus thermophilus (strain CNRZ 1066)</name>
    <dbReference type="NCBI Taxonomy" id="299768"/>
    <lineage>
        <taxon>Bacteria</taxon>
        <taxon>Bacillati</taxon>
        <taxon>Bacillota</taxon>
        <taxon>Bacilli</taxon>
        <taxon>Lactobacillales</taxon>
        <taxon>Streptococcaceae</taxon>
        <taxon>Streptococcus</taxon>
    </lineage>
</organism>
<feature type="chain" id="PRO_0000389891" description="Acetyl-coenzyme A carboxylase carboxyl transferase subunit beta">
    <location>
        <begin position="1"/>
        <end position="288"/>
    </location>
</feature>
<feature type="domain" description="CoA carboxyltransferase N-terminal" evidence="2">
    <location>
        <begin position="34"/>
        <end position="288"/>
    </location>
</feature>
<feature type="zinc finger region" description="C4-type" evidence="1">
    <location>
        <begin position="38"/>
        <end position="59"/>
    </location>
</feature>
<feature type="binding site" evidence="1">
    <location>
        <position position="38"/>
    </location>
    <ligand>
        <name>Zn(2+)</name>
        <dbReference type="ChEBI" id="CHEBI:29105"/>
    </ligand>
</feature>
<feature type="binding site" evidence="1">
    <location>
        <position position="41"/>
    </location>
    <ligand>
        <name>Zn(2+)</name>
        <dbReference type="ChEBI" id="CHEBI:29105"/>
    </ligand>
</feature>
<feature type="binding site" evidence="1">
    <location>
        <position position="56"/>
    </location>
    <ligand>
        <name>Zn(2+)</name>
        <dbReference type="ChEBI" id="CHEBI:29105"/>
    </ligand>
</feature>
<feature type="binding site" evidence="1">
    <location>
        <position position="59"/>
    </location>
    <ligand>
        <name>Zn(2+)</name>
        <dbReference type="ChEBI" id="CHEBI:29105"/>
    </ligand>
</feature>
<dbReference type="EC" id="2.1.3.15" evidence="1"/>
<dbReference type="EMBL" id="CP000024">
    <property type="protein sequence ID" value="AAV61994.1"/>
    <property type="molecule type" value="Genomic_DNA"/>
</dbReference>
<dbReference type="RefSeq" id="WP_002946040.1">
    <property type="nucleotide sequence ID" value="NC_006449.1"/>
</dbReference>
<dbReference type="SMR" id="Q5M175"/>
<dbReference type="GeneID" id="66898316"/>
<dbReference type="KEGG" id="stc:str0392"/>
<dbReference type="HOGENOM" id="CLU_015486_1_1_9"/>
<dbReference type="UniPathway" id="UPA00655">
    <property type="reaction ID" value="UER00711"/>
</dbReference>
<dbReference type="GO" id="GO:0009317">
    <property type="term" value="C:acetyl-CoA carboxylase complex"/>
    <property type="evidence" value="ECO:0007669"/>
    <property type="project" value="InterPro"/>
</dbReference>
<dbReference type="GO" id="GO:0003989">
    <property type="term" value="F:acetyl-CoA carboxylase activity"/>
    <property type="evidence" value="ECO:0007669"/>
    <property type="project" value="InterPro"/>
</dbReference>
<dbReference type="GO" id="GO:0005524">
    <property type="term" value="F:ATP binding"/>
    <property type="evidence" value="ECO:0007669"/>
    <property type="project" value="UniProtKB-KW"/>
</dbReference>
<dbReference type="GO" id="GO:0016743">
    <property type="term" value="F:carboxyl- or carbamoyltransferase activity"/>
    <property type="evidence" value="ECO:0007669"/>
    <property type="project" value="UniProtKB-UniRule"/>
</dbReference>
<dbReference type="GO" id="GO:0008270">
    <property type="term" value="F:zinc ion binding"/>
    <property type="evidence" value="ECO:0007669"/>
    <property type="project" value="UniProtKB-UniRule"/>
</dbReference>
<dbReference type="GO" id="GO:0006633">
    <property type="term" value="P:fatty acid biosynthetic process"/>
    <property type="evidence" value="ECO:0007669"/>
    <property type="project" value="UniProtKB-KW"/>
</dbReference>
<dbReference type="GO" id="GO:2001295">
    <property type="term" value="P:malonyl-CoA biosynthetic process"/>
    <property type="evidence" value="ECO:0007669"/>
    <property type="project" value="UniProtKB-UniRule"/>
</dbReference>
<dbReference type="Gene3D" id="3.90.226.10">
    <property type="entry name" value="2-enoyl-CoA Hydratase, Chain A, domain 1"/>
    <property type="match status" value="1"/>
</dbReference>
<dbReference type="HAMAP" id="MF_01395">
    <property type="entry name" value="AcetylCoA_CT_beta"/>
    <property type="match status" value="1"/>
</dbReference>
<dbReference type="InterPro" id="IPR034733">
    <property type="entry name" value="AcCoA_carboxyl_beta"/>
</dbReference>
<dbReference type="InterPro" id="IPR000438">
    <property type="entry name" value="Acetyl_CoA_COase_Trfase_b_su"/>
</dbReference>
<dbReference type="InterPro" id="IPR029045">
    <property type="entry name" value="ClpP/crotonase-like_dom_sf"/>
</dbReference>
<dbReference type="InterPro" id="IPR011762">
    <property type="entry name" value="COA_CT_N"/>
</dbReference>
<dbReference type="InterPro" id="IPR041010">
    <property type="entry name" value="Znf-ACC"/>
</dbReference>
<dbReference type="NCBIfam" id="TIGR00515">
    <property type="entry name" value="accD"/>
    <property type="match status" value="1"/>
</dbReference>
<dbReference type="PANTHER" id="PTHR42995">
    <property type="entry name" value="ACETYL-COENZYME A CARBOXYLASE CARBOXYL TRANSFERASE SUBUNIT BETA, CHLOROPLASTIC"/>
    <property type="match status" value="1"/>
</dbReference>
<dbReference type="PANTHER" id="PTHR42995:SF5">
    <property type="entry name" value="ACETYL-COENZYME A CARBOXYLASE CARBOXYL TRANSFERASE SUBUNIT BETA, CHLOROPLASTIC"/>
    <property type="match status" value="1"/>
</dbReference>
<dbReference type="Pfam" id="PF01039">
    <property type="entry name" value="Carboxyl_trans"/>
    <property type="match status" value="1"/>
</dbReference>
<dbReference type="Pfam" id="PF17848">
    <property type="entry name" value="Zn_ribbon_ACC"/>
    <property type="match status" value="1"/>
</dbReference>
<dbReference type="PRINTS" id="PR01070">
    <property type="entry name" value="ACCCTRFRASEB"/>
</dbReference>
<dbReference type="SUPFAM" id="SSF52096">
    <property type="entry name" value="ClpP/crotonase"/>
    <property type="match status" value="1"/>
</dbReference>
<dbReference type="PROSITE" id="PS50980">
    <property type="entry name" value="COA_CT_NTER"/>
    <property type="match status" value="1"/>
</dbReference>
<keyword id="KW-0067">ATP-binding</keyword>
<keyword id="KW-0963">Cytoplasm</keyword>
<keyword id="KW-0275">Fatty acid biosynthesis</keyword>
<keyword id="KW-0276">Fatty acid metabolism</keyword>
<keyword id="KW-0444">Lipid biosynthesis</keyword>
<keyword id="KW-0443">Lipid metabolism</keyword>
<keyword id="KW-0479">Metal-binding</keyword>
<keyword id="KW-0547">Nucleotide-binding</keyword>
<keyword id="KW-0808">Transferase</keyword>
<keyword id="KW-0862">Zinc</keyword>
<keyword id="KW-0863">Zinc-finger</keyword>
<proteinExistence type="inferred from homology"/>
<reference key="1">
    <citation type="journal article" date="2004" name="Nat. Biotechnol.">
        <title>Complete sequence and comparative genome analysis of the dairy bacterium Streptococcus thermophilus.</title>
        <authorList>
            <person name="Bolotin A."/>
            <person name="Quinquis B."/>
            <person name="Renault P."/>
            <person name="Sorokin A."/>
            <person name="Ehrlich S.D."/>
            <person name="Kulakauskas S."/>
            <person name="Lapidus A."/>
            <person name="Goltsman E."/>
            <person name="Mazur M."/>
            <person name="Pusch G.D."/>
            <person name="Fonstein M."/>
            <person name="Overbeek R."/>
            <person name="Kyprides N."/>
            <person name="Purnelle B."/>
            <person name="Prozzi D."/>
            <person name="Ngui K."/>
            <person name="Masuy D."/>
            <person name="Hancy F."/>
            <person name="Burteau S."/>
            <person name="Boutry M."/>
            <person name="Delcour J."/>
            <person name="Goffeau A."/>
            <person name="Hols P."/>
        </authorList>
    </citation>
    <scope>NUCLEOTIDE SEQUENCE [LARGE SCALE GENOMIC DNA]</scope>
    <source>
        <strain>CNRZ 1066</strain>
    </source>
</reference>
<protein>
    <recommendedName>
        <fullName evidence="1">Acetyl-coenzyme A carboxylase carboxyl transferase subunit beta</fullName>
        <shortName evidence="1">ACCase subunit beta</shortName>
        <shortName evidence="1">Acetyl-CoA carboxylase carboxyltransferase subunit beta</shortName>
        <ecNumber evidence="1">2.1.3.15</ecNumber>
    </recommendedName>
</protein>
<sequence>MGLFDRKEKYIRINPNRYVRNGVDHHVPEVPDDLFAKCPGCKQAIYQKDLGQAKICPNCSYAFRISAKERLDLTVDEGSFQELFTGIKTENPLNFPGYMEKLAATKEKTGLDEAVVTGVATIKGQKTALAIMDSNFIMASMGTVVGEKITKLFEYAILEKLPVVIFTASGGARMQEGIMSLMQMAKISAAVKRHSNAGLLYLTVLTDPTTGGVTASFAMQGDIILAEPQTLIGFAGRRVIENTVRETLPDDFQKAEFLQEHGFVDAIVKRTELADTIATLLSFHGGVQ</sequence>
<comment type="function">
    <text evidence="1">Component of the acetyl coenzyme A carboxylase (ACC) complex. Biotin carboxylase (BC) catalyzes the carboxylation of biotin on its carrier protein (BCCP) and then the CO(2) group is transferred by the transcarboxylase to acetyl-CoA to form malonyl-CoA.</text>
</comment>
<comment type="catalytic activity">
    <reaction evidence="1">
        <text>N(6)-carboxybiotinyl-L-lysyl-[protein] + acetyl-CoA = N(6)-biotinyl-L-lysyl-[protein] + malonyl-CoA</text>
        <dbReference type="Rhea" id="RHEA:54728"/>
        <dbReference type="Rhea" id="RHEA-COMP:10505"/>
        <dbReference type="Rhea" id="RHEA-COMP:10506"/>
        <dbReference type="ChEBI" id="CHEBI:57288"/>
        <dbReference type="ChEBI" id="CHEBI:57384"/>
        <dbReference type="ChEBI" id="CHEBI:83144"/>
        <dbReference type="ChEBI" id="CHEBI:83145"/>
        <dbReference type="EC" id="2.1.3.15"/>
    </reaction>
</comment>
<comment type="cofactor">
    <cofactor evidence="1">
        <name>Zn(2+)</name>
        <dbReference type="ChEBI" id="CHEBI:29105"/>
    </cofactor>
    <text evidence="1">Binds 1 zinc ion per subunit.</text>
</comment>
<comment type="pathway">
    <text evidence="1">Lipid metabolism; malonyl-CoA biosynthesis; malonyl-CoA from acetyl-CoA: step 1/1.</text>
</comment>
<comment type="subunit">
    <text evidence="1">Acetyl-CoA carboxylase is a heterohexamer composed of biotin carboxyl carrier protein (AccB), biotin carboxylase (AccC) and two subunits each of ACCase subunit alpha (AccA) and ACCase subunit beta (AccD).</text>
</comment>
<comment type="subcellular location">
    <subcellularLocation>
        <location evidence="1">Cytoplasm</location>
    </subcellularLocation>
</comment>
<comment type="similarity">
    <text evidence="1">Belongs to the AccD/PCCB family.</text>
</comment>
<accession>Q5M175</accession>
<name>ACCD_STRT1</name>
<gene>
    <name evidence="1" type="primary">accD</name>
    <name type="ordered locus">str0392</name>
</gene>